<keyword id="KW-0963">Cytoplasm</keyword>
<keyword id="KW-1015">Disulfide bond</keyword>
<keyword id="KW-0249">Electron transport</keyword>
<keyword id="KW-0676">Redox-active center</keyword>
<keyword id="KW-1185">Reference proteome</keyword>
<keyword id="KW-0813">Transport</keyword>
<reference key="1">
    <citation type="journal article" date="1997" name="Nature">
        <title>The complete genome sequence of the hyperthermophilic, sulphate-reducing archaeon Archaeoglobus fulgidus.</title>
        <authorList>
            <person name="Klenk H.-P."/>
            <person name="Clayton R.A."/>
            <person name="Tomb J.-F."/>
            <person name="White O."/>
            <person name="Nelson K.E."/>
            <person name="Ketchum K.A."/>
            <person name="Dodson R.J."/>
            <person name="Gwinn M.L."/>
            <person name="Hickey E.K."/>
            <person name="Peterson J.D."/>
            <person name="Richardson D.L."/>
            <person name="Kerlavage A.R."/>
            <person name="Graham D.E."/>
            <person name="Kyrpides N.C."/>
            <person name="Fleischmann R.D."/>
            <person name="Quackenbush J."/>
            <person name="Lee N.H."/>
            <person name="Sutton G.G."/>
            <person name="Gill S.R."/>
            <person name="Kirkness E.F."/>
            <person name="Dougherty B.A."/>
            <person name="McKenney K."/>
            <person name="Adams M.D."/>
            <person name="Loftus B.J."/>
            <person name="Peterson S.N."/>
            <person name="Reich C.I."/>
            <person name="McNeil L.K."/>
            <person name="Badger J.H."/>
            <person name="Glodek A."/>
            <person name="Zhou L."/>
            <person name="Overbeek R."/>
            <person name="Gocayne J.D."/>
            <person name="Weidman J.F."/>
            <person name="McDonald L.A."/>
            <person name="Utterback T.R."/>
            <person name="Cotton M.D."/>
            <person name="Spriggs T."/>
            <person name="Artiach P."/>
            <person name="Kaine B.P."/>
            <person name="Sykes S.M."/>
            <person name="Sadow P.W."/>
            <person name="D'Andrea K.P."/>
            <person name="Bowman C."/>
            <person name="Fujii C."/>
            <person name="Garland S.A."/>
            <person name="Mason T.M."/>
            <person name="Olsen G.J."/>
            <person name="Fraser C.M."/>
            <person name="Smith H.O."/>
            <person name="Woese C.R."/>
            <person name="Venter J.C."/>
        </authorList>
    </citation>
    <scope>NUCLEOTIDE SEQUENCE [LARGE SCALE GENOMIC DNA]</scope>
    <source>
        <strain>ATCC 49558 / DSM 4304 / JCM 9628 / NBRC 100126 / VC-16</strain>
    </source>
</reference>
<comment type="function">
    <text evidence="1">Acts to maintain redox homeostasis; functions as a protein disulfide reductase.</text>
</comment>
<comment type="subcellular location">
    <subcellularLocation>
        <location evidence="1">Cytoplasm</location>
    </subcellularLocation>
</comment>
<comment type="similarity">
    <text evidence="3">Belongs to the glutaredoxin family.</text>
</comment>
<evidence type="ECO:0000250" key="1"/>
<evidence type="ECO:0000255" key="2">
    <source>
        <dbReference type="PROSITE-ProRule" id="PRU00686"/>
    </source>
</evidence>
<evidence type="ECO:0000305" key="3"/>
<name>THIO_ARCFU</name>
<dbReference type="EMBL" id="AE000782">
    <property type="protein sequence ID" value="AAB89109.1"/>
    <property type="molecule type" value="Genomic_DNA"/>
</dbReference>
<dbReference type="PIR" id="A69518">
    <property type="entry name" value="A69518"/>
</dbReference>
<dbReference type="SMR" id="O28137"/>
<dbReference type="STRING" id="224325.AF_2145"/>
<dbReference type="PaxDb" id="224325-AF_2145"/>
<dbReference type="EnsemblBacteria" id="AAB89109">
    <property type="protein sequence ID" value="AAB89109"/>
    <property type="gene ID" value="AF_2145"/>
</dbReference>
<dbReference type="KEGG" id="afu:AF_2145"/>
<dbReference type="eggNOG" id="arCOG01972">
    <property type="taxonomic scope" value="Archaea"/>
</dbReference>
<dbReference type="HOGENOM" id="CLU_090389_20_2_2"/>
<dbReference type="OrthoDB" id="35385at2157"/>
<dbReference type="PhylomeDB" id="O28137"/>
<dbReference type="Proteomes" id="UP000002199">
    <property type="component" value="Chromosome"/>
</dbReference>
<dbReference type="GO" id="GO:0005737">
    <property type="term" value="C:cytoplasm"/>
    <property type="evidence" value="ECO:0007669"/>
    <property type="project" value="UniProtKB-SubCell"/>
</dbReference>
<dbReference type="GO" id="GO:0009055">
    <property type="term" value="F:electron transfer activity"/>
    <property type="evidence" value="ECO:0007669"/>
    <property type="project" value="InterPro"/>
</dbReference>
<dbReference type="GO" id="GO:0015035">
    <property type="term" value="F:protein-disulfide reductase activity"/>
    <property type="evidence" value="ECO:0007669"/>
    <property type="project" value="InterPro"/>
</dbReference>
<dbReference type="GO" id="GO:0045454">
    <property type="term" value="P:cell redox homeostasis"/>
    <property type="evidence" value="ECO:0007669"/>
    <property type="project" value="InterPro"/>
</dbReference>
<dbReference type="CDD" id="cd02973">
    <property type="entry name" value="TRX_GRX_like"/>
    <property type="match status" value="1"/>
</dbReference>
<dbReference type="Gene3D" id="3.40.30.10">
    <property type="entry name" value="Glutaredoxin"/>
    <property type="match status" value="1"/>
</dbReference>
<dbReference type="InterPro" id="IPR011767">
    <property type="entry name" value="GLR_AS"/>
</dbReference>
<dbReference type="InterPro" id="IPR004502">
    <property type="entry name" value="Thio_glut"/>
</dbReference>
<dbReference type="InterPro" id="IPR012336">
    <property type="entry name" value="Thioredoxin-like_fold"/>
</dbReference>
<dbReference type="InterPro" id="IPR036249">
    <property type="entry name" value="Thioredoxin-like_sf"/>
</dbReference>
<dbReference type="NCBIfam" id="TIGR00411">
    <property type="entry name" value="redox_disulf_1"/>
    <property type="match status" value="1"/>
</dbReference>
<dbReference type="Pfam" id="PF13192">
    <property type="entry name" value="Thioredoxin_3"/>
    <property type="match status" value="1"/>
</dbReference>
<dbReference type="SUPFAM" id="SSF52833">
    <property type="entry name" value="Thioredoxin-like"/>
    <property type="match status" value="1"/>
</dbReference>
<dbReference type="PROSITE" id="PS00195">
    <property type="entry name" value="GLUTAREDOXIN_1"/>
    <property type="match status" value="1"/>
</dbReference>
<dbReference type="PROSITE" id="PS51354">
    <property type="entry name" value="GLUTAREDOXIN_2"/>
    <property type="match status" value="1"/>
</dbReference>
<feature type="chain" id="PRO_0000141646" description="Probable Thioredoxin">
    <location>
        <begin position="1"/>
        <end position="91"/>
    </location>
</feature>
<feature type="domain" description="Glutaredoxin" evidence="2">
    <location>
        <begin position="1"/>
        <end position="91"/>
    </location>
</feature>
<feature type="disulfide bond" description="Redox-active" evidence="1">
    <location>
        <begin position="12"/>
        <end position="15"/>
    </location>
</feature>
<gene>
    <name type="ordered locus">AF_2145</name>
</gene>
<organism>
    <name type="scientific">Archaeoglobus fulgidus (strain ATCC 49558 / DSM 4304 / JCM 9628 / NBRC 100126 / VC-16)</name>
    <dbReference type="NCBI Taxonomy" id="224325"/>
    <lineage>
        <taxon>Archaea</taxon>
        <taxon>Methanobacteriati</taxon>
        <taxon>Methanobacteriota</taxon>
        <taxon>Archaeoglobi</taxon>
        <taxon>Archaeoglobales</taxon>
        <taxon>Archaeoglobaceae</taxon>
        <taxon>Archaeoglobus</taxon>
    </lineage>
</organism>
<accession>O28137</accession>
<proteinExistence type="inferred from homology"/>
<protein>
    <recommendedName>
        <fullName>Probable Thioredoxin</fullName>
    </recommendedName>
</protein>
<sequence length="91" mass="9920">MVMMKLFTSPTCPYCPKAEKVVSKVAKEEGVLAINLPVNTDEGLKEALKFGIRGVPALVINDKYLILGVPDEGELRQLIRKLKGGEEYGAS</sequence>